<reference key="1">
    <citation type="journal article" date="2005" name="J. Bacteriol.">
        <title>Insights on evolution of virulence and resistance from the complete genome analysis of an early methicillin-resistant Staphylococcus aureus strain and a biofilm-producing methicillin-resistant Staphylococcus epidermidis strain.</title>
        <authorList>
            <person name="Gill S.R."/>
            <person name="Fouts D.E."/>
            <person name="Archer G.L."/>
            <person name="Mongodin E.F."/>
            <person name="DeBoy R.T."/>
            <person name="Ravel J."/>
            <person name="Paulsen I.T."/>
            <person name="Kolonay J.F."/>
            <person name="Brinkac L.M."/>
            <person name="Beanan M.J."/>
            <person name="Dodson R.J."/>
            <person name="Daugherty S.C."/>
            <person name="Madupu R."/>
            <person name="Angiuoli S.V."/>
            <person name="Durkin A.S."/>
            <person name="Haft D.H."/>
            <person name="Vamathevan J.J."/>
            <person name="Khouri H."/>
            <person name="Utterback T.R."/>
            <person name="Lee C."/>
            <person name="Dimitrov G."/>
            <person name="Jiang L."/>
            <person name="Qin H."/>
            <person name="Weidman J."/>
            <person name="Tran K."/>
            <person name="Kang K.H."/>
            <person name="Hance I.R."/>
            <person name="Nelson K.E."/>
            <person name="Fraser C.M."/>
        </authorList>
    </citation>
    <scope>NUCLEOTIDE SEQUENCE [LARGE SCALE GENOMIC DNA]</scope>
    <source>
        <strain>COL</strain>
    </source>
</reference>
<proteinExistence type="inferred from homology"/>
<dbReference type="EC" id="1.4.1.2"/>
<dbReference type="EMBL" id="CP000046">
    <property type="protein sequence ID" value="AAW37929.1"/>
    <property type="molecule type" value="Genomic_DNA"/>
</dbReference>
<dbReference type="RefSeq" id="WP_000138487.1">
    <property type="nucleotide sequence ID" value="NZ_JBGOFO010000002.1"/>
</dbReference>
<dbReference type="SMR" id="Q5HHC7"/>
<dbReference type="KEGG" id="sac:SACOL0961"/>
<dbReference type="HOGENOM" id="CLU_025763_1_2_9"/>
<dbReference type="Proteomes" id="UP000000530">
    <property type="component" value="Chromosome"/>
</dbReference>
<dbReference type="GO" id="GO:0004352">
    <property type="term" value="F:glutamate dehydrogenase (NAD+) activity"/>
    <property type="evidence" value="ECO:0000250"/>
    <property type="project" value="UniProtKB"/>
</dbReference>
<dbReference type="GO" id="GO:0006520">
    <property type="term" value="P:amino acid metabolic process"/>
    <property type="evidence" value="ECO:0000250"/>
    <property type="project" value="UniProtKB"/>
</dbReference>
<dbReference type="GO" id="GO:0006538">
    <property type="term" value="P:glutamate catabolic process"/>
    <property type="evidence" value="ECO:0007669"/>
    <property type="project" value="TreeGrafter"/>
</dbReference>
<dbReference type="CDD" id="cd01076">
    <property type="entry name" value="NAD_bind_1_Glu_DH"/>
    <property type="match status" value="1"/>
</dbReference>
<dbReference type="FunFam" id="3.40.50.10860:FF:000008">
    <property type="entry name" value="Glutamate dehydrogenase"/>
    <property type="match status" value="1"/>
</dbReference>
<dbReference type="FunFam" id="3.40.50.720:FF:000242">
    <property type="entry name" value="Glutamate dehydrogenase"/>
    <property type="match status" value="1"/>
</dbReference>
<dbReference type="Gene3D" id="1.10.8.1210">
    <property type="match status" value="2"/>
</dbReference>
<dbReference type="Gene3D" id="3.40.50.10860">
    <property type="entry name" value="Leucine Dehydrogenase, chain A, domain 1"/>
    <property type="match status" value="1"/>
</dbReference>
<dbReference type="Gene3D" id="3.40.50.720">
    <property type="entry name" value="NAD(P)-binding Rossmann-like Domain"/>
    <property type="match status" value="1"/>
</dbReference>
<dbReference type="InterPro" id="IPR046346">
    <property type="entry name" value="Aminoacid_DH-like_N_sf"/>
</dbReference>
<dbReference type="InterPro" id="IPR006095">
    <property type="entry name" value="Glu/Leu/Phe/Val/Trp_DH"/>
</dbReference>
<dbReference type="InterPro" id="IPR006096">
    <property type="entry name" value="Glu/Leu/Phe/Val/Trp_DH_C"/>
</dbReference>
<dbReference type="InterPro" id="IPR006097">
    <property type="entry name" value="Glu/Leu/Phe/Val/Trp_DH_dimer"/>
</dbReference>
<dbReference type="InterPro" id="IPR033524">
    <property type="entry name" value="Glu/Leu/Phe/Val_DH_AS"/>
</dbReference>
<dbReference type="InterPro" id="IPR014362">
    <property type="entry name" value="Glu_DH"/>
</dbReference>
<dbReference type="InterPro" id="IPR036291">
    <property type="entry name" value="NAD(P)-bd_dom_sf"/>
</dbReference>
<dbReference type="InterPro" id="IPR033922">
    <property type="entry name" value="NAD_bind_Glu_DH"/>
</dbReference>
<dbReference type="PANTHER" id="PTHR11606">
    <property type="entry name" value="GLUTAMATE DEHYDROGENASE"/>
    <property type="match status" value="1"/>
</dbReference>
<dbReference type="PANTHER" id="PTHR11606:SF13">
    <property type="entry name" value="GLUTAMATE DEHYDROGENASE 1, MITOCHONDRIAL"/>
    <property type="match status" value="1"/>
</dbReference>
<dbReference type="Pfam" id="PF00208">
    <property type="entry name" value="ELFV_dehydrog"/>
    <property type="match status" value="1"/>
</dbReference>
<dbReference type="Pfam" id="PF02812">
    <property type="entry name" value="ELFV_dehydrog_N"/>
    <property type="match status" value="1"/>
</dbReference>
<dbReference type="PIRSF" id="PIRSF000185">
    <property type="entry name" value="Glu_DH"/>
    <property type="match status" value="1"/>
</dbReference>
<dbReference type="PRINTS" id="PR00082">
    <property type="entry name" value="GLFDHDRGNASE"/>
</dbReference>
<dbReference type="SMART" id="SM00839">
    <property type="entry name" value="ELFV_dehydrog"/>
    <property type="match status" value="1"/>
</dbReference>
<dbReference type="SUPFAM" id="SSF53223">
    <property type="entry name" value="Aminoacid dehydrogenase-like, N-terminal domain"/>
    <property type="match status" value="1"/>
</dbReference>
<dbReference type="SUPFAM" id="SSF51735">
    <property type="entry name" value="NAD(P)-binding Rossmann-fold domains"/>
    <property type="match status" value="1"/>
</dbReference>
<dbReference type="PROSITE" id="PS00074">
    <property type="entry name" value="GLFV_DEHYDROGENASE"/>
    <property type="match status" value="1"/>
</dbReference>
<organism>
    <name type="scientific">Staphylococcus aureus (strain COL)</name>
    <dbReference type="NCBI Taxonomy" id="93062"/>
    <lineage>
        <taxon>Bacteria</taxon>
        <taxon>Bacillati</taxon>
        <taxon>Bacillota</taxon>
        <taxon>Bacilli</taxon>
        <taxon>Bacillales</taxon>
        <taxon>Staphylococcaceae</taxon>
        <taxon>Staphylococcus</taxon>
    </lineage>
</organism>
<comment type="catalytic activity">
    <reaction>
        <text>L-glutamate + NAD(+) + H2O = 2-oxoglutarate + NH4(+) + NADH + H(+)</text>
        <dbReference type="Rhea" id="RHEA:15133"/>
        <dbReference type="ChEBI" id="CHEBI:15377"/>
        <dbReference type="ChEBI" id="CHEBI:15378"/>
        <dbReference type="ChEBI" id="CHEBI:16810"/>
        <dbReference type="ChEBI" id="CHEBI:28938"/>
        <dbReference type="ChEBI" id="CHEBI:29985"/>
        <dbReference type="ChEBI" id="CHEBI:57540"/>
        <dbReference type="ChEBI" id="CHEBI:57945"/>
        <dbReference type="EC" id="1.4.1.2"/>
    </reaction>
</comment>
<comment type="subunit">
    <text evidence="1">Homohexamer.</text>
</comment>
<comment type="similarity">
    <text evidence="3">Belongs to the Glu/Leu/Phe/Val dehydrogenases family.</text>
</comment>
<feature type="chain" id="PRO_0000223326" description="NAD-specific glutamate dehydrogenase">
    <location>
        <begin position="1"/>
        <end position="414"/>
    </location>
</feature>
<feature type="active site" description="Proton donor" evidence="2">
    <location>
        <position position="106"/>
    </location>
</feature>
<feature type="binding site" evidence="1">
    <location>
        <position position="70"/>
    </location>
    <ligand>
        <name>substrate</name>
    </ligand>
</feature>
<feature type="binding site" evidence="1">
    <location>
        <position position="94"/>
    </location>
    <ligand>
        <name>substrate</name>
    </ligand>
</feature>
<feature type="binding site" evidence="1">
    <location>
        <position position="190"/>
    </location>
    <ligand>
        <name>NAD(+)</name>
        <dbReference type="ChEBI" id="CHEBI:57540"/>
    </ligand>
</feature>
<feature type="binding site" evidence="1">
    <location>
        <position position="221"/>
    </location>
    <ligand>
        <name>NAD(+)</name>
        <dbReference type="ChEBI" id="CHEBI:57540"/>
    </ligand>
</feature>
<feature type="binding site" evidence="1">
    <location>
        <position position="348"/>
    </location>
    <ligand>
        <name>substrate</name>
    </ligand>
</feature>
<feature type="site" description="Important for catalysis" evidence="1">
    <location>
        <position position="146"/>
    </location>
</feature>
<protein>
    <recommendedName>
        <fullName>NAD-specific glutamate dehydrogenase</fullName>
        <shortName>NAD-GDH</shortName>
        <ecNumber>1.4.1.2</ecNumber>
    </recommendedName>
</protein>
<keyword id="KW-0520">NAD</keyword>
<keyword id="KW-0560">Oxidoreductase</keyword>
<name>DHE2_STAAC</name>
<gene>
    <name type="primary">gluD</name>
    <name type="ordered locus">SACOL0961</name>
</gene>
<sequence length="414" mass="45760">MTENNNLVTSTQGIIKEALHKLGFDEGMYDLIKEPLRMLQVRIPVRMDDGTVKTFTGYRAQHNDAVGPTKGGVRFHPDVDEEEVKALSMWMTLKCGIVNLPYGGGKGGIVCDPRQMSIHEVERLSRGYVRAISQFVGPNKDIPAPDVFTNSQIMAWMMDEYSALDKFNSPGFITGKPIVLGGSHGRDRSTALGVVIAIEQAAKRRNMQIEGAKVVIQGFGNAGSFLAKFLYDLGAKIVGISDAYGALHDPNGLDIDYLLDRRDSFGTVTNLFEETISNKELFELDCDILVPAAISNQITEDNAHDIKASIVVEAANGPTTPEATRILTERGILLVPDVLASAGGVTVSYFEWVQNNQGYYWSEEEVNEKLREKLEAAFDTIYELSQNRKIDMRLAAYIIGIKRTAEAARYRGWA</sequence>
<evidence type="ECO:0000250" key="1"/>
<evidence type="ECO:0000255" key="2">
    <source>
        <dbReference type="PROSITE-ProRule" id="PRU10011"/>
    </source>
</evidence>
<evidence type="ECO:0000305" key="3"/>
<accession>Q5HHC7</accession>